<comment type="function">
    <text evidence="1">Involved in synaptic inhibition in the brain. Selectively regulates inhibitory presynaptic differentiation through interacting with presynaptic NRXN2.</text>
</comment>
<comment type="subunit">
    <text evidence="1">Interacts (Ig-like 1 domain) with NRXN2 (via Laminin G-like 1 domain) in a trans-interaction manner.</text>
</comment>
<comment type="subcellular location">
    <subcellularLocation>
        <location evidence="4">Postsynaptic cell membrane</location>
        <topology evidence="4">Lipid-anchor</topology>
        <topology evidence="4">GPI-anchor</topology>
    </subcellularLocation>
</comment>
<comment type="tissue specificity">
    <text evidence="4">Expressed in brain.</text>
</comment>
<comment type="domain">
    <text evidence="1">Ig-like 1 domain is indispensable for synaptogenic activity whereas Ig-like 2 domain is secondarily responsible for the activity.</text>
</comment>
<feature type="signal peptide" evidence="2">
    <location>
        <begin position="1"/>
        <end position="24"/>
    </location>
</feature>
<feature type="chain" id="PRO_0000444205" description="Immunoglobulin superfamily member 21">
    <location>
        <begin position="25"/>
        <end position="468"/>
    </location>
</feature>
<feature type="domain" description="Ig-like 1" evidence="3">
    <location>
        <begin position="25"/>
        <end position="132"/>
    </location>
</feature>
<feature type="domain" description="Ig-like 2" evidence="3">
    <location>
        <begin position="344"/>
        <end position="429"/>
    </location>
</feature>
<feature type="disulfide bond" evidence="3">
    <location>
        <begin position="46"/>
        <end position="116"/>
    </location>
</feature>
<reference key="1">
    <citation type="journal article" date="2004" name="Nature">
        <title>Genome sequence of the Brown Norway rat yields insights into mammalian evolution.</title>
        <authorList>
            <person name="Gibbs R.A."/>
            <person name="Weinstock G.M."/>
            <person name="Metzker M.L."/>
            <person name="Muzny D.M."/>
            <person name="Sodergren E.J."/>
            <person name="Scherer S."/>
            <person name="Scott G."/>
            <person name="Steffen D."/>
            <person name="Worley K.C."/>
            <person name="Burch P.E."/>
            <person name="Okwuonu G."/>
            <person name="Hines S."/>
            <person name="Lewis L."/>
            <person name="Deramo C."/>
            <person name="Delgado O."/>
            <person name="Dugan-Rocha S."/>
            <person name="Miner G."/>
            <person name="Morgan M."/>
            <person name="Hawes A."/>
            <person name="Gill R."/>
            <person name="Holt R.A."/>
            <person name="Adams M.D."/>
            <person name="Amanatides P.G."/>
            <person name="Baden-Tillson H."/>
            <person name="Barnstead M."/>
            <person name="Chin S."/>
            <person name="Evans C.A."/>
            <person name="Ferriera S."/>
            <person name="Fosler C."/>
            <person name="Glodek A."/>
            <person name="Gu Z."/>
            <person name="Jennings D."/>
            <person name="Kraft C.L."/>
            <person name="Nguyen T."/>
            <person name="Pfannkoch C.M."/>
            <person name="Sitter C."/>
            <person name="Sutton G.G."/>
            <person name="Venter J.C."/>
            <person name="Woodage T."/>
            <person name="Smith D."/>
            <person name="Lee H.-M."/>
            <person name="Gustafson E."/>
            <person name="Cahill P."/>
            <person name="Kana A."/>
            <person name="Doucette-Stamm L."/>
            <person name="Weinstock K."/>
            <person name="Fechtel K."/>
            <person name="Weiss R.B."/>
            <person name="Dunn D.M."/>
            <person name="Green E.D."/>
            <person name="Blakesley R.W."/>
            <person name="Bouffard G.G."/>
            <person name="De Jong P.J."/>
            <person name="Osoegawa K."/>
            <person name="Zhu B."/>
            <person name="Marra M."/>
            <person name="Schein J."/>
            <person name="Bosdet I."/>
            <person name="Fjell C."/>
            <person name="Jones S."/>
            <person name="Krzywinski M."/>
            <person name="Mathewson C."/>
            <person name="Siddiqui A."/>
            <person name="Wye N."/>
            <person name="McPherson J."/>
            <person name="Zhao S."/>
            <person name="Fraser C.M."/>
            <person name="Shetty J."/>
            <person name="Shatsman S."/>
            <person name="Geer K."/>
            <person name="Chen Y."/>
            <person name="Abramzon S."/>
            <person name="Nierman W.C."/>
            <person name="Havlak P.H."/>
            <person name="Chen R."/>
            <person name="Durbin K.J."/>
            <person name="Egan A."/>
            <person name="Ren Y."/>
            <person name="Song X.-Z."/>
            <person name="Li B."/>
            <person name="Liu Y."/>
            <person name="Qin X."/>
            <person name="Cawley S."/>
            <person name="Cooney A.J."/>
            <person name="D'Souza L.M."/>
            <person name="Martin K."/>
            <person name="Wu J.Q."/>
            <person name="Gonzalez-Garay M.L."/>
            <person name="Jackson A.R."/>
            <person name="Kalafus K.J."/>
            <person name="McLeod M.P."/>
            <person name="Milosavljevic A."/>
            <person name="Virk D."/>
            <person name="Volkov A."/>
            <person name="Wheeler D.A."/>
            <person name="Zhang Z."/>
            <person name="Bailey J.A."/>
            <person name="Eichler E.E."/>
            <person name="Tuzun E."/>
            <person name="Birney E."/>
            <person name="Mongin E."/>
            <person name="Ureta-Vidal A."/>
            <person name="Woodwark C."/>
            <person name="Zdobnov E."/>
            <person name="Bork P."/>
            <person name="Suyama M."/>
            <person name="Torrents D."/>
            <person name="Alexandersson M."/>
            <person name="Trask B.J."/>
            <person name="Young J.M."/>
            <person name="Huang H."/>
            <person name="Wang H."/>
            <person name="Xing H."/>
            <person name="Daniels S."/>
            <person name="Gietzen D."/>
            <person name="Schmidt J."/>
            <person name="Stevens K."/>
            <person name="Vitt U."/>
            <person name="Wingrove J."/>
            <person name="Camara F."/>
            <person name="Mar Alba M."/>
            <person name="Abril J.F."/>
            <person name="Guigo R."/>
            <person name="Smit A."/>
            <person name="Dubchak I."/>
            <person name="Rubin E.M."/>
            <person name="Couronne O."/>
            <person name="Poliakov A."/>
            <person name="Huebner N."/>
            <person name="Ganten D."/>
            <person name="Goesele C."/>
            <person name="Hummel O."/>
            <person name="Kreitler T."/>
            <person name="Lee Y.-A."/>
            <person name="Monti J."/>
            <person name="Schulz H."/>
            <person name="Zimdahl H."/>
            <person name="Himmelbauer H."/>
            <person name="Lehrach H."/>
            <person name="Jacob H.J."/>
            <person name="Bromberg S."/>
            <person name="Gullings-Handley J."/>
            <person name="Jensen-Seaman M.I."/>
            <person name="Kwitek A.E."/>
            <person name="Lazar J."/>
            <person name="Pasko D."/>
            <person name="Tonellato P.J."/>
            <person name="Twigger S."/>
            <person name="Ponting C.P."/>
            <person name="Duarte J.M."/>
            <person name="Rice S."/>
            <person name="Goodstadt L."/>
            <person name="Beatson S.A."/>
            <person name="Emes R.D."/>
            <person name="Winter E.E."/>
            <person name="Webber C."/>
            <person name="Brandt P."/>
            <person name="Nyakatura G."/>
            <person name="Adetobi M."/>
            <person name="Chiaromonte F."/>
            <person name="Elnitski L."/>
            <person name="Eswara P."/>
            <person name="Hardison R.C."/>
            <person name="Hou M."/>
            <person name="Kolbe D."/>
            <person name="Makova K."/>
            <person name="Miller W."/>
            <person name="Nekrutenko A."/>
            <person name="Riemer C."/>
            <person name="Schwartz S."/>
            <person name="Taylor J."/>
            <person name="Yang S."/>
            <person name="Zhang Y."/>
            <person name="Lindpaintner K."/>
            <person name="Andrews T.D."/>
            <person name="Caccamo M."/>
            <person name="Clamp M."/>
            <person name="Clarke L."/>
            <person name="Curwen V."/>
            <person name="Durbin R.M."/>
            <person name="Eyras E."/>
            <person name="Searle S.M."/>
            <person name="Cooper G.M."/>
            <person name="Batzoglou S."/>
            <person name="Brudno M."/>
            <person name="Sidow A."/>
            <person name="Stone E.A."/>
            <person name="Payseur B.A."/>
            <person name="Bourque G."/>
            <person name="Lopez-Otin C."/>
            <person name="Puente X.S."/>
            <person name="Chakrabarti K."/>
            <person name="Chatterji S."/>
            <person name="Dewey C."/>
            <person name="Pachter L."/>
            <person name="Bray N."/>
            <person name="Yap V.B."/>
            <person name="Caspi A."/>
            <person name="Tesler G."/>
            <person name="Pevzner P.A."/>
            <person name="Haussler D."/>
            <person name="Roskin K.M."/>
            <person name="Baertsch R."/>
            <person name="Clawson H."/>
            <person name="Furey T.S."/>
            <person name="Hinrichs A.S."/>
            <person name="Karolchik D."/>
            <person name="Kent W.J."/>
            <person name="Rosenbloom K.R."/>
            <person name="Trumbower H."/>
            <person name="Weirauch M."/>
            <person name="Cooper D.N."/>
            <person name="Stenson P.D."/>
            <person name="Ma B."/>
            <person name="Brent M."/>
            <person name="Arumugam M."/>
            <person name="Shteynberg D."/>
            <person name="Copley R.R."/>
            <person name="Taylor M.S."/>
            <person name="Riethman H."/>
            <person name="Mudunuri U."/>
            <person name="Peterson J."/>
            <person name="Guyer M."/>
            <person name="Felsenfeld A."/>
            <person name="Old S."/>
            <person name="Mockrin S."/>
            <person name="Collins F.S."/>
        </authorList>
    </citation>
    <scope>NUCLEOTIDE SEQUENCE [LARGE SCALE GENOMIC DNA]</scope>
    <source>
        <strain>Brown Norway</strain>
    </source>
</reference>
<reference key="2">
    <citation type="journal article" date="2017" name="Nat. Commun.">
        <title>IgSF21 promotes differentiation of inhibitory synapses via binding to neurexin2alpha.</title>
        <authorList>
            <person name="Tanabe Y."/>
            <person name="Naito Y."/>
            <person name="Vasuta C."/>
            <person name="Lee A.K."/>
            <person name="Soumounou Y."/>
            <person name="Linhoff M.W."/>
            <person name="Takahashi H."/>
        </authorList>
    </citation>
    <scope>SUBCELLULAR LOCATION</scope>
    <scope>TISSUE SPECIFICITY</scope>
</reference>
<sequence length="468" mass="52044">MRAAPSLRRASCLLLAAILDLARGYLTVNIEPLPPVVAGDAVTLKCNFKTDGRMREIVWYRVTDGGTIKQKIFTFDAMFSTNYSHMENYRKREDLVYQSTVRLPEVRISDNGPYECHVGIYDRATREKVVLASGNIFLNVMAPPTSIEVVAADSPAPFSRYQAQNFTLVCIVSGGKPAPMVYFKRDGEPIDAVPLTELPASSSGSVQDSRPFRSLLHRDVDDTKMQKSLSLLDTEYRAGRPYTERPSRSLTQDPNLFVQPTTENIPETVVSREFPRWVHSAEPVYFLRHSRTPGSDGTVEVRALLTWTLNPQIDNEALFSCEVKHPALSMPMQAEVTLVAPKGPKIMMTPSRARVGDTVRILVHGFQNEVFPEPMFTWTRVGSRLLDGSAEFDGKELVLERVPAELNGSMYRCTAQNPLGSTDTHTRLIVFENPNIPRGTEDSRGSASGPTGVRLTLVLALTVILELT</sequence>
<evidence type="ECO:0000250" key="1">
    <source>
        <dbReference type="UniProtKB" id="Q7TNR6"/>
    </source>
</evidence>
<evidence type="ECO:0000255" key="2"/>
<evidence type="ECO:0000255" key="3">
    <source>
        <dbReference type="PROSITE-ProRule" id="PRU00114"/>
    </source>
</evidence>
<evidence type="ECO:0000269" key="4">
    <source>
    </source>
</evidence>
<evidence type="ECO:0000305" key="5"/>
<evidence type="ECO:0000312" key="6">
    <source>
        <dbReference type="RGD" id="1310117"/>
    </source>
</evidence>
<accession>M0RAS4</accession>
<proteinExistence type="evidence at transcript level"/>
<keyword id="KW-1003">Cell membrane</keyword>
<keyword id="KW-1015">Disulfide bond</keyword>
<keyword id="KW-0325">Glycoprotein</keyword>
<keyword id="KW-0336">GPI-anchor</keyword>
<keyword id="KW-0393">Immunoglobulin domain</keyword>
<keyword id="KW-0449">Lipoprotein</keyword>
<keyword id="KW-0472">Membrane</keyword>
<keyword id="KW-0628">Postsynaptic cell membrane</keyword>
<keyword id="KW-1185">Reference proteome</keyword>
<keyword id="KW-0677">Repeat</keyword>
<keyword id="KW-0732">Signal</keyword>
<keyword id="KW-0770">Synapse</keyword>
<dbReference type="EMBL" id="AABR07050255">
    <property type="status" value="NOT_ANNOTATED_CDS"/>
    <property type="molecule type" value="Genomic_DNA"/>
</dbReference>
<dbReference type="EMBL" id="AABR07050256">
    <property type="status" value="NOT_ANNOTATED_CDS"/>
    <property type="molecule type" value="Genomic_DNA"/>
</dbReference>
<dbReference type="EMBL" id="AABR07050257">
    <property type="status" value="NOT_ANNOTATED_CDS"/>
    <property type="molecule type" value="Genomic_DNA"/>
</dbReference>
<dbReference type="EMBL" id="AABR07050258">
    <property type="status" value="NOT_ANNOTATED_CDS"/>
    <property type="molecule type" value="Genomic_DNA"/>
</dbReference>
<dbReference type="EMBL" id="AABR07050259">
    <property type="status" value="NOT_ANNOTATED_CDS"/>
    <property type="molecule type" value="Genomic_DNA"/>
</dbReference>
<dbReference type="RefSeq" id="NP_001258383.1">
    <property type="nucleotide sequence ID" value="NM_001271454.2"/>
</dbReference>
<dbReference type="RefSeq" id="XP_017448798.1">
    <property type="nucleotide sequence ID" value="XM_017593309.1"/>
</dbReference>
<dbReference type="FunCoup" id="M0RAS4">
    <property type="interactions" value="682"/>
</dbReference>
<dbReference type="STRING" id="10116.ENSRNOP00000066631"/>
<dbReference type="PhosphoSitePlus" id="M0RAS4"/>
<dbReference type="PaxDb" id="10116-ENSRNOP00000066631"/>
<dbReference type="Ensembl" id="ENSRNOT00000074336.3">
    <property type="protein sequence ID" value="ENSRNOP00000066631.3"/>
    <property type="gene ID" value="ENSRNOG00000049959.3"/>
</dbReference>
<dbReference type="GeneID" id="298591"/>
<dbReference type="KEGG" id="rno:298591"/>
<dbReference type="AGR" id="RGD:1310117"/>
<dbReference type="CTD" id="84966"/>
<dbReference type="RGD" id="1310117">
    <property type="gene designation" value="Igsf21"/>
</dbReference>
<dbReference type="eggNOG" id="ENOG502QQMY">
    <property type="taxonomic scope" value="Eukaryota"/>
</dbReference>
<dbReference type="GeneTree" id="ENSGT00390000002421"/>
<dbReference type="HOGENOM" id="CLU_054054_0_0_1"/>
<dbReference type="InParanoid" id="M0RAS4"/>
<dbReference type="OMA" id="YTEHPSR"/>
<dbReference type="OrthoDB" id="9940999at2759"/>
<dbReference type="PRO" id="PR:M0RAS4"/>
<dbReference type="Proteomes" id="UP000002494">
    <property type="component" value="Chromosome 5"/>
</dbReference>
<dbReference type="GO" id="GO:0009897">
    <property type="term" value="C:external side of plasma membrane"/>
    <property type="evidence" value="ECO:0000250"/>
    <property type="project" value="UniProtKB"/>
</dbReference>
<dbReference type="GO" id="GO:0060077">
    <property type="term" value="C:inhibitory synapse"/>
    <property type="evidence" value="ECO:0000250"/>
    <property type="project" value="UniProtKB"/>
</dbReference>
<dbReference type="GO" id="GO:0098839">
    <property type="term" value="C:postsynaptic density membrane"/>
    <property type="evidence" value="ECO:0000266"/>
    <property type="project" value="RGD"/>
</dbReference>
<dbReference type="GO" id="GO:0042734">
    <property type="term" value="C:presynaptic membrane"/>
    <property type="evidence" value="ECO:0000250"/>
    <property type="project" value="UniProtKB"/>
</dbReference>
<dbReference type="GO" id="GO:0007156">
    <property type="term" value="P:homophilic cell adhesion via plasma membrane adhesion molecules"/>
    <property type="evidence" value="ECO:0000318"/>
    <property type="project" value="GO_Central"/>
</dbReference>
<dbReference type="GO" id="GO:0060074">
    <property type="term" value="P:synapse maturation"/>
    <property type="evidence" value="ECO:0000250"/>
    <property type="project" value="UniProtKB"/>
</dbReference>
<dbReference type="GO" id="GO:0099550">
    <property type="term" value="P:trans-synaptic signaling, modulating synaptic transmission"/>
    <property type="evidence" value="ECO:0000266"/>
    <property type="project" value="RGD"/>
</dbReference>
<dbReference type="FunFam" id="2.60.40.10:FF:000509">
    <property type="entry name" value="Immunoglobin superfamily member 21"/>
    <property type="match status" value="1"/>
</dbReference>
<dbReference type="FunFam" id="2.60.40.10:FF:000858">
    <property type="entry name" value="Immunoglobin superfamily member 21"/>
    <property type="match status" value="1"/>
</dbReference>
<dbReference type="Gene3D" id="2.60.40.10">
    <property type="entry name" value="Immunoglobulins"/>
    <property type="match status" value="3"/>
</dbReference>
<dbReference type="InterPro" id="IPR007110">
    <property type="entry name" value="Ig-like_dom"/>
</dbReference>
<dbReference type="InterPro" id="IPR036179">
    <property type="entry name" value="Ig-like_dom_sf"/>
</dbReference>
<dbReference type="InterPro" id="IPR013783">
    <property type="entry name" value="Ig-like_fold"/>
</dbReference>
<dbReference type="InterPro" id="IPR003599">
    <property type="entry name" value="Ig_sub"/>
</dbReference>
<dbReference type="InterPro" id="IPR013106">
    <property type="entry name" value="Ig_V-set"/>
</dbReference>
<dbReference type="InterPro" id="IPR051427">
    <property type="entry name" value="Nectin/Nectin-like"/>
</dbReference>
<dbReference type="PANTHER" id="PTHR23277:SF121">
    <property type="entry name" value="IMMUNOGLOBULIN SUPERFAMILY MEMBER 21"/>
    <property type="match status" value="1"/>
</dbReference>
<dbReference type="PANTHER" id="PTHR23277">
    <property type="entry name" value="NECTIN-RELATED"/>
    <property type="match status" value="1"/>
</dbReference>
<dbReference type="Pfam" id="PF07686">
    <property type="entry name" value="V-set"/>
    <property type="match status" value="1"/>
</dbReference>
<dbReference type="SMART" id="SM00409">
    <property type="entry name" value="IG"/>
    <property type="match status" value="2"/>
</dbReference>
<dbReference type="SUPFAM" id="SSF48726">
    <property type="entry name" value="Immunoglobulin"/>
    <property type="match status" value="3"/>
</dbReference>
<dbReference type="PROSITE" id="PS50835">
    <property type="entry name" value="IG_LIKE"/>
    <property type="match status" value="2"/>
</dbReference>
<dbReference type="PROSITE" id="PS00290">
    <property type="entry name" value="IG_MHC"/>
    <property type="match status" value="1"/>
</dbReference>
<gene>
    <name evidence="6" type="primary">Igsf21</name>
</gene>
<organism>
    <name type="scientific">Rattus norvegicus</name>
    <name type="common">Rat</name>
    <dbReference type="NCBI Taxonomy" id="10116"/>
    <lineage>
        <taxon>Eukaryota</taxon>
        <taxon>Metazoa</taxon>
        <taxon>Chordata</taxon>
        <taxon>Craniata</taxon>
        <taxon>Vertebrata</taxon>
        <taxon>Euteleostomi</taxon>
        <taxon>Mammalia</taxon>
        <taxon>Eutheria</taxon>
        <taxon>Euarchontoglires</taxon>
        <taxon>Glires</taxon>
        <taxon>Rodentia</taxon>
        <taxon>Myomorpha</taxon>
        <taxon>Muroidea</taxon>
        <taxon>Muridae</taxon>
        <taxon>Murinae</taxon>
        <taxon>Rattus</taxon>
    </lineage>
</organism>
<name>IGS21_RAT</name>
<protein>
    <recommendedName>
        <fullName evidence="5">Immunoglobulin superfamily member 21</fullName>
        <shortName evidence="5">IgSF21</shortName>
    </recommendedName>
</protein>